<keyword id="KW-0175">Coiled coil</keyword>
<keyword id="KW-1185">Reference proteome</keyword>
<accession>Q5R6I3</accession>
<reference key="1">
    <citation type="submission" date="2004-11" db="EMBL/GenBank/DDBJ databases">
        <authorList>
            <consortium name="The German cDNA consortium"/>
        </authorList>
    </citation>
    <scope>NUCLEOTIDE SEQUENCE [LARGE SCALE MRNA]</scope>
    <source>
        <tissue>Heart</tissue>
    </source>
</reference>
<feature type="chain" id="PRO_0000306398" description="Lysine-rich coiled-coil protein 1">
    <location>
        <begin position="1"/>
        <end position="258"/>
    </location>
</feature>
<feature type="region of interest" description="Disordered" evidence="2">
    <location>
        <begin position="142"/>
        <end position="258"/>
    </location>
</feature>
<feature type="coiled-coil region" evidence="1">
    <location>
        <begin position="211"/>
        <end position="248"/>
    </location>
</feature>
<feature type="compositionally biased region" description="Basic residues" evidence="2">
    <location>
        <begin position="150"/>
        <end position="161"/>
    </location>
</feature>
<feature type="compositionally biased region" description="Basic and acidic residues" evidence="2">
    <location>
        <begin position="162"/>
        <end position="175"/>
    </location>
</feature>
<feature type="compositionally biased region" description="Basic and acidic residues" evidence="2">
    <location>
        <begin position="183"/>
        <end position="213"/>
    </location>
</feature>
<feature type="compositionally biased region" description="Basic and acidic residues" evidence="2">
    <location>
        <begin position="220"/>
        <end position="232"/>
    </location>
</feature>
<name>KRCC1_PONAB</name>
<evidence type="ECO:0000255" key="1"/>
<evidence type="ECO:0000256" key="2">
    <source>
        <dbReference type="SAM" id="MobiDB-lite"/>
    </source>
</evidence>
<protein>
    <recommendedName>
        <fullName>Lysine-rich coiled-coil protein 1</fullName>
    </recommendedName>
</protein>
<gene>
    <name type="primary">KRCC1</name>
</gene>
<dbReference type="EMBL" id="CR860506">
    <property type="protein sequence ID" value="CAH92628.1"/>
    <property type="molecule type" value="mRNA"/>
</dbReference>
<dbReference type="RefSeq" id="NP_001126539.1">
    <property type="nucleotide sequence ID" value="NM_001133067.1"/>
</dbReference>
<dbReference type="FunCoup" id="Q5R6I3">
    <property type="interactions" value="104"/>
</dbReference>
<dbReference type="GeneID" id="100173529"/>
<dbReference type="KEGG" id="pon:100173529"/>
<dbReference type="CTD" id="51315"/>
<dbReference type="eggNOG" id="ENOG502RTYF">
    <property type="taxonomic scope" value="Eukaryota"/>
</dbReference>
<dbReference type="InParanoid" id="Q5R6I3"/>
<dbReference type="OrthoDB" id="9747435at2759"/>
<dbReference type="Proteomes" id="UP000001595">
    <property type="component" value="Unplaced"/>
</dbReference>
<dbReference type="PANTHER" id="PTHR46742">
    <property type="entry name" value="LYSINE-RICH COILED-COIL PROTEIN 1"/>
    <property type="match status" value="1"/>
</dbReference>
<dbReference type="PANTHER" id="PTHR46742:SF3">
    <property type="entry name" value="LYSINE-RICH COILED-COIL PROTEIN 1"/>
    <property type="match status" value="1"/>
</dbReference>
<organism>
    <name type="scientific">Pongo abelii</name>
    <name type="common">Sumatran orangutan</name>
    <name type="synonym">Pongo pygmaeus abelii</name>
    <dbReference type="NCBI Taxonomy" id="9601"/>
    <lineage>
        <taxon>Eukaryota</taxon>
        <taxon>Metazoa</taxon>
        <taxon>Chordata</taxon>
        <taxon>Craniata</taxon>
        <taxon>Vertebrata</taxon>
        <taxon>Euteleostomi</taxon>
        <taxon>Mammalia</taxon>
        <taxon>Eutheria</taxon>
        <taxon>Euarchontoglires</taxon>
        <taxon>Primates</taxon>
        <taxon>Haplorrhini</taxon>
        <taxon>Catarrhini</taxon>
        <taxon>Hominidae</taxon>
        <taxon>Pongo</taxon>
    </lineage>
</organism>
<proteinExistence type="evidence at transcript level"/>
<sequence length="258" mass="30868">MKHSKKTYDSFQDELEDYIKVQKARGLEPKTCFRKMRGDYLETCGYKGEVNSRPTYRMFDQRLPPETIQTYPRSCTISQTVENRLPQWLPAHDSRLRLDSLSYCQFTRDCFSEKPVPLNFDQQEYICGSHGVEPRVYKHFSDNSTSTHQASHKQIHQKRKRHPEEGREKSEEEWSKHKRKKSCKEIDLDKHKSIQRKKTEVEIETVHVSTEKLKNRKEKKGRDVVSKKEERKRTKKKKEQGQERTEEEMLWDQSILGF</sequence>